<proteinExistence type="evidence at protein level"/>
<protein>
    <recommendedName>
        <fullName evidence="5">Small ribosomal subunit protein eS27</fullName>
    </recommendedName>
    <alternativeName>
        <fullName>40S ribosomal protein S27</fullName>
    </alternativeName>
</protein>
<reference evidence="5 6" key="1">
    <citation type="journal article" date="2000" name="J. Neurochem.">
        <title>Evolutionarily distinct classes of S27 ribosomal proteins with differential mRNA expression in rat hypothalamus.</title>
        <authorList>
            <person name="Thomas E.A."/>
            <person name="Alvarez C.E."/>
            <person name="Sutcliffe J.G."/>
        </authorList>
    </citation>
    <scope>NUCLEOTIDE SEQUENCE [MRNA]</scope>
    <scope>TISSUE SPECIFICITY</scope>
    <source>
        <strain evidence="6">Sprague-Dawley</strain>
        <tissue evidence="6">CNS</tissue>
        <tissue>Corpus striatum</tissue>
    </source>
</reference>
<reference key="2">
    <citation type="journal article" date="2004" name="Genome Res.">
        <title>The status, quality, and expansion of the NIH full-length cDNA project: the Mammalian Gene Collection (MGC).</title>
        <authorList>
            <consortium name="The MGC Project Team"/>
        </authorList>
    </citation>
    <scope>NUCLEOTIDE SEQUENCE [LARGE SCALE MRNA]</scope>
    <source>
        <tissue>Pituitary</tissue>
    </source>
</reference>
<reference key="3">
    <citation type="journal article" date="2012" name="Nat. Commun.">
        <title>Quantitative maps of protein phosphorylation sites across 14 different rat organs and tissues.</title>
        <authorList>
            <person name="Lundby A."/>
            <person name="Secher A."/>
            <person name="Lage K."/>
            <person name="Nordsborg N.B."/>
            <person name="Dmytriyev A."/>
            <person name="Lundby C."/>
            <person name="Olsen J.V."/>
        </authorList>
    </citation>
    <scope>PHOSPHORYLATION [LARGE SCALE ANALYSIS] AT SER-11</scope>
    <scope>IDENTIFICATION BY MASS SPECTROMETRY [LARGE SCALE ANALYSIS]</scope>
</reference>
<keyword id="KW-0963">Cytoplasm</keyword>
<keyword id="KW-0479">Metal-binding</keyword>
<keyword id="KW-0539">Nucleus</keyword>
<keyword id="KW-0597">Phosphoprotein</keyword>
<keyword id="KW-1185">Reference proteome</keyword>
<keyword id="KW-0687">Ribonucleoprotein</keyword>
<keyword id="KW-0689">Ribosomal protein</keyword>
<keyword id="KW-0862">Zinc</keyword>
<keyword id="KW-0863">Zinc-finger</keyword>
<evidence type="ECO:0000250" key="1">
    <source>
        <dbReference type="UniProtKB" id="P42677"/>
    </source>
</evidence>
<evidence type="ECO:0000255" key="2"/>
<evidence type="ECO:0000256" key="3">
    <source>
        <dbReference type="SAM" id="MobiDB-lite"/>
    </source>
</evidence>
<evidence type="ECO:0000269" key="4">
    <source>
    </source>
</evidence>
<evidence type="ECO:0000305" key="5"/>
<evidence type="ECO:0000312" key="6">
    <source>
        <dbReference type="EMBL" id="AAD56582.1"/>
    </source>
</evidence>
<evidence type="ECO:0000312" key="7">
    <source>
        <dbReference type="RGD" id="621045"/>
    </source>
</evidence>
<evidence type="ECO:0007744" key="8">
    <source>
    </source>
</evidence>
<feature type="chain" id="PRO_0000149053" description="Small ribosomal subunit protein eS27">
    <location>
        <begin position="1"/>
        <end position="84"/>
    </location>
</feature>
<feature type="zinc finger region" description="C4-type" evidence="2">
    <location>
        <begin position="38"/>
        <end position="60"/>
    </location>
</feature>
<feature type="region of interest" description="Disordered" evidence="3">
    <location>
        <begin position="1"/>
        <end position="23"/>
    </location>
</feature>
<feature type="compositionally biased region" description="Basic and acidic residues" evidence="3">
    <location>
        <begin position="1"/>
        <end position="16"/>
    </location>
</feature>
<feature type="modified residue" description="Phosphoserine" evidence="8">
    <location>
        <position position="11"/>
    </location>
</feature>
<comment type="function">
    <text evidence="1">Component of the small ribosomal subunit. The ribosome is a large ribonucleoprotein complex responsible for the synthesis of proteins in the cell. Required for proper rRNA processing and maturation of 18S rRNAs. Part of the small subunit (SSU) processome, first precursor of the small eukaryotic ribosomal subunit. During the assembly of the SSU processome in the nucleolus, many ribosome biogenesis factors, an RNA chaperone and ribosomal proteins associate with the nascent pre-rRNA and work in concert to generate RNA folding, modifications, rearrangements and cleavage as well as targeted degradation of pre-ribosomal RNA by the RNA exosome.</text>
</comment>
<comment type="cofactor">
    <cofactor evidence="5">
        <name>Zn(2+)</name>
        <dbReference type="ChEBI" id="CHEBI:29105"/>
    </cofactor>
    <text evidence="5">Binds 1 zinc ion per subunit.</text>
</comment>
<comment type="subunit">
    <text evidence="1">Component of the small ribosomal subunit. Part of the small subunit (SSU) processome, composed of more than 70 proteins and the RNA chaperone small nucleolar RNA (snoRNA) U3.</text>
</comment>
<comment type="subcellular location">
    <subcellularLocation>
        <location evidence="1">Cytoplasm</location>
    </subcellularLocation>
    <subcellularLocation>
        <location evidence="1">Nucleus</location>
        <location evidence="1">Nucleolus</location>
    </subcellularLocation>
</comment>
<comment type="tissue specificity">
    <text evidence="4">Expressed in the striatum, cerebellum, hippocampus, hypothalamus, pons, heart and liver.</text>
</comment>
<comment type="similarity">
    <text evidence="5">Belongs to the eukaryotic ribosomal protein eS27 family.</text>
</comment>
<gene>
    <name evidence="7" type="primary">Rps27</name>
    <name evidence="6" type="synonym">S27-1</name>
</gene>
<organism>
    <name type="scientific">Rattus norvegicus</name>
    <name type="common">Rat</name>
    <dbReference type="NCBI Taxonomy" id="10116"/>
    <lineage>
        <taxon>Eukaryota</taxon>
        <taxon>Metazoa</taxon>
        <taxon>Chordata</taxon>
        <taxon>Craniata</taxon>
        <taxon>Vertebrata</taxon>
        <taxon>Euteleostomi</taxon>
        <taxon>Mammalia</taxon>
        <taxon>Eutheria</taxon>
        <taxon>Euarchontoglires</taxon>
        <taxon>Glires</taxon>
        <taxon>Rodentia</taxon>
        <taxon>Myomorpha</taxon>
        <taxon>Muroidea</taxon>
        <taxon>Muridae</taxon>
        <taxon>Murinae</taxon>
        <taxon>Rattus</taxon>
    </lineage>
</organism>
<name>RS27_RAT</name>
<sequence length="84" mass="9461">MPLAKDLLHPSPEEEKRKHKKKRLVQSPNSYFMDVKCPGCYKITTVFSHAQTVVLCVGCSTVLCQPTGGKARLTEGCSFRRKQH</sequence>
<dbReference type="EMBL" id="AF184893">
    <property type="protein sequence ID" value="AAD56582.1"/>
    <property type="molecule type" value="mRNA"/>
</dbReference>
<dbReference type="EMBL" id="BC061539">
    <property type="protein sequence ID" value="AAH61539.1"/>
    <property type="molecule type" value="mRNA"/>
</dbReference>
<dbReference type="RefSeq" id="NP_446049.1">
    <property type="nucleotide sequence ID" value="NM_053597.3"/>
</dbReference>
<dbReference type="SMR" id="Q71TY3"/>
<dbReference type="BioGRID" id="250185">
    <property type="interactions" value="5"/>
</dbReference>
<dbReference type="FunCoup" id="Q71TY3">
    <property type="interactions" value="2159"/>
</dbReference>
<dbReference type="IntAct" id="Q71TY3">
    <property type="interactions" value="3"/>
</dbReference>
<dbReference type="STRING" id="10116.ENSRNOP00000022897"/>
<dbReference type="iPTMnet" id="Q71TY3"/>
<dbReference type="PhosphoSitePlus" id="Q71TY3"/>
<dbReference type="jPOST" id="Q71TY3"/>
<dbReference type="PaxDb" id="10116-ENSRNOP00000022897"/>
<dbReference type="Ensembl" id="ENSRNOT00000022897.5">
    <property type="protein sequence ID" value="ENSRNOP00000022897.3"/>
    <property type="gene ID" value="ENSRNOG00000016961.5"/>
</dbReference>
<dbReference type="GeneID" id="94266"/>
<dbReference type="KEGG" id="rno:94266"/>
<dbReference type="UCSC" id="RGD:621045">
    <property type="organism name" value="rat"/>
</dbReference>
<dbReference type="AGR" id="RGD:621045"/>
<dbReference type="CTD" id="6232"/>
<dbReference type="RGD" id="621045">
    <property type="gene designation" value="Rps27"/>
</dbReference>
<dbReference type="eggNOG" id="KOG1779">
    <property type="taxonomic scope" value="Eukaryota"/>
</dbReference>
<dbReference type="GeneTree" id="ENSGT00950000182891"/>
<dbReference type="HOGENOM" id="CLU_130128_3_0_1"/>
<dbReference type="InParanoid" id="Q71TY3"/>
<dbReference type="OMA" id="CASILCQ"/>
<dbReference type="OrthoDB" id="43215at9989"/>
<dbReference type="PhylomeDB" id="Q71TY3"/>
<dbReference type="TreeFam" id="TF300265"/>
<dbReference type="Reactome" id="R-RNO-141444">
    <property type="pathway name" value="Amplification of signal from unattached kinetochores via a MAD2 inhibitory signal"/>
</dbReference>
<dbReference type="Reactome" id="R-RNO-156827">
    <property type="pathway name" value="L13a-mediated translational silencing of Ceruloplasmin expression"/>
</dbReference>
<dbReference type="Reactome" id="R-RNO-1799339">
    <property type="pathway name" value="SRP-dependent cotranslational protein targeting to membrane"/>
</dbReference>
<dbReference type="Reactome" id="R-RNO-2467813">
    <property type="pathway name" value="Separation of Sister Chromatids"/>
</dbReference>
<dbReference type="Reactome" id="R-RNO-2500257">
    <property type="pathway name" value="Resolution of Sister Chromatid Cohesion"/>
</dbReference>
<dbReference type="Reactome" id="R-RNO-5663220">
    <property type="pathway name" value="RHO GTPases Activate Formins"/>
</dbReference>
<dbReference type="Reactome" id="R-RNO-6791226">
    <property type="pathway name" value="Major pathway of rRNA processing in the nucleolus and cytosol"/>
</dbReference>
<dbReference type="Reactome" id="R-RNO-68877">
    <property type="pathway name" value="Mitotic Prometaphase"/>
</dbReference>
<dbReference type="Reactome" id="R-RNO-72649">
    <property type="pathway name" value="Translation initiation complex formation"/>
</dbReference>
<dbReference type="Reactome" id="R-RNO-72689">
    <property type="pathway name" value="Formation of a pool of free 40S subunits"/>
</dbReference>
<dbReference type="Reactome" id="R-RNO-72695">
    <property type="pathway name" value="Formation of the ternary complex, and subsequently, the 43S complex"/>
</dbReference>
<dbReference type="Reactome" id="R-RNO-72702">
    <property type="pathway name" value="Ribosomal scanning and start codon recognition"/>
</dbReference>
<dbReference type="Reactome" id="R-RNO-72706">
    <property type="pathway name" value="GTP hydrolysis and joining of the 60S ribosomal subunit"/>
</dbReference>
<dbReference type="Reactome" id="R-RNO-9648025">
    <property type="pathway name" value="EML4 and NUDC in mitotic spindle formation"/>
</dbReference>
<dbReference type="Reactome" id="R-RNO-975956">
    <property type="pathway name" value="Nonsense Mediated Decay (NMD) independent of the Exon Junction Complex (EJC)"/>
</dbReference>
<dbReference type="Reactome" id="R-RNO-975957">
    <property type="pathway name" value="Nonsense Mediated Decay (NMD) enhanced by the Exon Junction Complex (EJC)"/>
</dbReference>
<dbReference type="PRO" id="PR:Q71TY3"/>
<dbReference type="Proteomes" id="UP000002494">
    <property type="component" value="Chromosome 2"/>
</dbReference>
<dbReference type="Bgee" id="ENSRNOG00000016961">
    <property type="expression patterns" value="Expressed in thymus and 19 other cell types or tissues"/>
</dbReference>
<dbReference type="GO" id="GO:0022626">
    <property type="term" value="C:cytosolic ribosome"/>
    <property type="evidence" value="ECO:0000266"/>
    <property type="project" value="RGD"/>
</dbReference>
<dbReference type="GO" id="GO:0022627">
    <property type="term" value="C:cytosolic small ribosomal subunit"/>
    <property type="evidence" value="ECO:0000314"/>
    <property type="project" value="RGD"/>
</dbReference>
<dbReference type="GO" id="GO:0098982">
    <property type="term" value="C:GABA-ergic synapse"/>
    <property type="evidence" value="ECO:0000314"/>
    <property type="project" value="SynGO"/>
</dbReference>
<dbReference type="GO" id="GO:0098978">
    <property type="term" value="C:glutamatergic synapse"/>
    <property type="evidence" value="ECO:0000314"/>
    <property type="project" value="SynGO"/>
</dbReference>
<dbReference type="GO" id="GO:0005730">
    <property type="term" value="C:nucleolus"/>
    <property type="evidence" value="ECO:0007669"/>
    <property type="project" value="UniProtKB-SubCell"/>
</dbReference>
<dbReference type="GO" id="GO:0005634">
    <property type="term" value="C:nucleus"/>
    <property type="evidence" value="ECO:0000266"/>
    <property type="project" value="RGD"/>
</dbReference>
<dbReference type="GO" id="GO:0098794">
    <property type="term" value="C:postsynapse"/>
    <property type="evidence" value="ECO:0000266"/>
    <property type="project" value="RGD"/>
</dbReference>
<dbReference type="GO" id="GO:0014069">
    <property type="term" value="C:postsynaptic density"/>
    <property type="evidence" value="ECO:0000266"/>
    <property type="project" value="RGD"/>
</dbReference>
<dbReference type="GO" id="GO:0098793">
    <property type="term" value="C:presynapse"/>
    <property type="evidence" value="ECO:0000314"/>
    <property type="project" value="SynGO"/>
</dbReference>
<dbReference type="GO" id="GO:0005840">
    <property type="term" value="C:ribosome"/>
    <property type="evidence" value="ECO:0000266"/>
    <property type="project" value="RGD"/>
</dbReference>
<dbReference type="GO" id="GO:0032040">
    <property type="term" value="C:small-subunit processome"/>
    <property type="evidence" value="ECO:0000250"/>
    <property type="project" value="UniProtKB"/>
</dbReference>
<dbReference type="GO" id="GO:0045202">
    <property type="term" value="C:synapse"/>
    <property type="evidence" value="ECO:0000266"/>
    <property type="project" value="RGD"/>
</dbReference>
<dbReference type="GO" id="GO:0003723">
    <property type="term" value="F:RNA binding"/>
    <property type="evidence" value="ECO:0000318"/>
    <property type="project" value="GO_Central"/>
</dbReference>
<dbReference type="GO" id="GO:0003735">
    <property type="term" value="F:structural constituent of ribosome"/>
    <property type="evidence" value="ECO:0000266"/>
    <property type="project" value="RGD"/>
</dbReference>
<dbReference type="GO" id="GO:0008270">
    <property type="term" value="F:zinc ion binding"/>
    <property type="evidence" value="ECO:0007669"/>
    <property type="project" value="UniProtKB-KW"/>
</dbReference>
<dbReference type="GO" id="GO:0000028">
    <property type="term" value="P:ribosomal small subunit assembly"/>
    <property type="evidence" value="ECO:0000318"/>
    <property type="project" value="GO_Central"/>
</dbReference>
<dbReference type="GO" id="GO:0042274">
    <property type="term" value="P:ribosomal small subunit biogenesis"/>
    <property type="evidence" value="ECO:0000250"/>
    <property type="project" value="UniProtKB"/>
</dbReference>
<dbReference type="GO" id="GO:0006364">
    <property type="term" value="P:rRNA processing"/>
    <property type="evidence" value="ECO:0000250"/>
    <property type="project" value="UniProtKB"/>
</dbReference>
<dbReference type="GO" id="GO:0140242">
    <property type="term" value="P:translation at postsynapse"/>
    <property type="evidence" value="ECO:0000266"/>
    <property type="project" value="RGD"/>
</dbReference>
<dbReference type="GO" id="GO:0140236">
    <property type="term" value="P:translation at presynapse"/>
    <property type="evidence" value="ECO:0000266"/>
    <property type="project" value="RGD"/>
</dbReference>
<dbReference type="FunFam" id="2.20.25.100:FF:000001">
    <property type="entry name" value="40S ribosomal protein S27"/>
    <property type="match status" value="1"/>
</dbReference>
<dbReference type="Gene3D" id="2.20.25.100">
    <property type="entry name" value="Zn-binding ribosomal proteins"/>
    <property type="match status" value="1"/>
</dbReference>
<dbReference type="HAMAP" id="MF_00371">
    <property type="entry name" value="Ribosomal_eS27"/>
    <property type="match status" value="1"/>
</dbReference>
<dbReference type="InterPro" id="IPR000592">
    <property type="entry name" value="Ribosomal_eS27"/>
</dbReference>
<dbReference type="InterPro" id="IPR023407">
    <property type="entry name" value="Ribosomal_eS27_Zn-bd_dom_sf"/>
</dbReference>
<dbReference type="InterPro" id="IPR011332">
    <property type="entry name" value="Ribosomal_zn-bd"/>
</dbReference>
<dbReference type="PANTHER" id="PTHR11594">
    <property type="entry name" value="40S RIBOSOMAL PROTEIN S27"/>
    <property type="match status" value="1"/>
</dbReference>
<dbReference type="Pfam" id="PF01667">
    <property type="entry name" value="Ribosomal_S27e"/>
    <property type="match status" value="1"/>
</dbReference>
<dbReference type="SUPFAM" id="SSF57829">
    <property type="entry name" value="Zn-binding ribosomal proteins"/>
    <property type="match status" value="1"/>
</dbReference>
<dbReference type="PROSITE" id="PS01168">
    <property type="entry name" value="RIBOSOMAL_S27E"/>
    <property type="match status" value="1"/>
</dbReference>
<accession>Q71TY3</accession>